<name>RL18_MYCPN</name>
<proteinExistence type="evidence at protein level"/>
<feature type="chain" id="PRO_0000131303" description="Large ribosomal subunit protein uL18">
    <location>
        <begin position="1"/>
        <end position="116"/>
    </location>
</feature>
<feature type="helix" evidence="3">
    <location>
        <begin position="4"/>
        <end position="22"/>
    </location>
</feature>
<feature type="strand" evidence="3">
    <location>
        <begin position="28"/>
        <end position="34"/>
    </location>
</feature>
<feature type="strand" evidence="3">
    <location>
        <begin position="39"/>
        <end position="45"/>
    </location>
</feature>
<feature type="turn" evidence="3">
    <location>
        <begin position="46"/>
        <end position="49"/>
    </location>
</feature>
<feature type="strand" evidence="3">
    <location>
        <begin position="50"/>
        <end position="55"/>
    </location>
</feature>
<feature type="helix" evidence="3">
    <location>
        <begin position="57"/>
        <end position="60"/>
    </location>
</feature>
<feature type="helix" evidence="3">
    <location>
        <begin position="67"/>
        <end position="83"/>
    </location>
</feature>
<feature type="strand" evidence="3">
    <location>
        <begin position="88"/>
        <end position="96"/>
    </location>
</feature>
<feature type="helix" evidence="3">
    <location>
        <begin position="101"/>
        <end position="110"/>
    </location>
</feature>
<feature type="turn" evidence="3">
    <location>
        <begin position="111"/>
        <end position="113"/>
    </location>
</feature>
<dbReference type="EMBL" id="U34795">
    <property type="protein sequence ID" value="AAC43700.1"/>
    <property type="molecule type" value="Genomic_DNA"/>
</dbReference>
<dbReference type="EMBL" id="U00089">
    <property type="protein sequence ID" value="AAB96298.1"/>
    <property type="molecule type" value="Genomic_DNA"/>
</dbReference>
<dbReference type="PIR" id="S62826">
    <property type="entry name" value="S62826"/>
</dbReference>
<dbReference type="RefSeq" id="NP_109869.1">
    <property type="nucleotide sequence ID" value="NC_000912.1"/>
</dbReference>
<dbReference type="RefSeq" id="WP_010874538.1">
    <property type="nucleotide sequence ID" value="NZ_OU342337.1"/>
</dbReference>
<dbReference type="PDB" id="7OOD">
    <property type="method" value="EM"/>
    <property type="resolution" value="3.40 A"/>
    <property type="chains" value="n=1-116"/>
</dbReference>
<dbReference type="PDB" id="7P6Z">
    <property type="method" value="EM"/>
    <property type="resolution" value="3.50 A"/>
    <property type="chains" value="n=1-116"/>
</dbReference>
<dbReference type="PDB" id="7PAH">
    <property type="method" value="EM"/>
    <property type="resolution" value="9.50 A"/>
    <property type="chains" value="n=1-116"/>
</dbReference>
<dbReference type="PDB" id="7PAI">
    <property type="method" value="EM"/>
    <property type="resolution" value="6.70 A"/>
    <property type="chains" value="n=1-116"/>
</dbReference>
<dbReference type="PDB" id="7PAJ">
    <property type="method" value="EM"/>
    <property type="resolution" value="7.30 A"/>
    <property type="chains" value="n=1-116"/>
</dbReference>
<dbReference type="PDB" id="7PAK">
    <property type="method" value="EM"/>
    <property type="resolution" value="5.30 A"/>
    <property type="chains" value="n=1-116"/>
</dbReference>
<dbReference type="PDB" id="7PAL">
    <property type="method" value="EM"/>
    <property type="resolution" value="4.70 A"/>
    <property type="chains" value="n=1-116"/>
</dbReference>
<dbReference type="PDB" id="7PAM">
    <property type="method" value="EM"/>
    <property type="resolution" value="6.80 A"/>
    <property type="chains" value="n=1-116"/>
</dbReference>
<dbReference type="PDB" id="7PAN">
    <property type="method" value="EM"/>
    <property type="resolution" value="9.70 A"/>
    <property type="chains" value="n=1-116"/>
</dbReference>
<dbReference type="PDB" id="7PAO">
    <property type="method" value="EM"/>
    <property type="resolution" value="7.00 A"/>
    <property type="chains" value="n=1-116"/>
</dbReference>
<dbReference type="PDB" id="7PAQ">
    <property type="method" value="EM"/>
    <property type="resolution" value="8.90 A"/>
    <property type="chains" value="n=1-116"/>
</dbReference>
<dbReference type="PDB" id="7PAR">
    <property type="method" value="EM"/>
    <property type="resolution" value="8.20 A"/>
    <property type="chains" value="n=1-116"/>
</dbReference>
<dbReference type="PDB" id="7PAS">
    <property type="method" value="EM"/>
    <property type="resolution" value="16.00 A"/>
    <property type="chains" value="n=1-116"/>
</dbReference>
<dbReference type="PDB" id="7PAT">
    <property type="method" value="EM"/>
    <property type="resolution" value="9.20 A"/>
    <property type="chains" value="n=1-116"/>
</dbReference>
<dbReference type="PDB" id="7PAU">
    <property type="method" value="EM"/>
    <property type="resolution" value="8.30 A"/>
    <property type="chains" value="n=1-116"/>
</dbReference>
<dbReference type="PDB" id="7PH9">
    <property type="method" value="EM"/>
    <property type="resolution" value="8.70 A"/>
    <property type="chains" value="n=1-116"/>
</dbReference>
<dbReference type="PDB" id="7PHA">
    <property type="method" value="EM"/>
    <property type="resolution" value="8.50 A"/>
    <property type="chains" value="n=1-116"/>
</dbReference>
<dbReference type="PDB" id="7PHB">
    <property type="method" value="EM"/>
    <property type="resolution" value="4.90 A"/>
    <property type="chains" value="n=1-116"/>
</dbReference>
<dbReference type="PDB" id="7PHC">
    <property type="method" value="EM"/>
    <property type="resolution" value="9.90 A"/>
    <property type="chains" value="n=1-116"/>
</dbReference>
<dbReference type="PDB" id="7PI8">
    <property type="method" value="EM"/>
    <property type="resolution" value="8.90 A"/>
    <property type="chains" value="n=1-116"/>
</dbReference>
<dbReference type="PDB" id="7PI9">
    <property type="method" value="EM"/>
    <property type="resolution" value="6.30 A"/>
    <property type="chains" value="n=1-116"/>
</dbReference>
<dbReference type="PDB" id="7PIA">
    <property type="method" value="EM"/>
    <property type="resolution" value="13.60 A"/>
    <property type="chains" value="n=1-116"/>
</dbReference>
<dbReference type="PDB" id="7PIB">
    <property type="method" value="EM"/>
    <property type="resolution" value="4.70 A"/>
    <property type="chains" value="n=1-116"/>
</dbReference>
<dbReference type="PDB" id="7PIC">
    <property type="method" value="EM"/>
    <property type="resolution" value="9.10 A"/>
    <property type="chains" value="n=1-116"/>
</dbReference>
<dbReference type="PDB" id="7PIO">
    <property type="method" value="EM"/>
    <property type="resolution" value="9.50 A"/>
    <property type="chains" value="n=1-116"/>
</dbReference>
<dbReference type="PDB" id="7PIP">
    <property type="method" value="EM"/>
    <property type="resolution" value="9.30 A"/>
    <property type="chains" value="n=1-116"/>
</dbReference>
<dbReference type="PDB" id="7PIQ">
    <property type="method" value="EM"/>
    <property type="resolution" value="9.70 A"/>
    <property type="chains" value="n=1-116"/>
</dbReference>
<dbReference type="PDB" id="7PIR">
    <property type="method" value="EM"/>
    <property type="resolution" value="12.10 A"/>
    <property type="chains" value="n=1-116"/>
</dbReference>
<dbReference type="PDB" id="7PIS">
    <property type="method" value="EM"/>
    <property type="resolution" value="15.00 A"/>
    <property type="chains" value="n=1-116"/>
</dbReference>
<dbReference type="PDB" id="7PIT">
    <property type="method" value="EM"/>
    <property type="resolution" value="5.70 A"/>
    <property type="chains" value="n=1-116"/>
</dbReference>
<dbReference type="PDB" id="8P7X">
    <property type="method" value="EM"/>
    <property type="resolution" value="3.03 A"/>
    <property type="chains" value="n=1-116"/>
</dbReference>
<dbReference type="PDB" id="8P7Y">
    <property type="method" value="EM"/>
    <property type="resolution" value="3.70 A"/>
    <property type="chains" value="n=1-116"/>
</dbReference>
<dbReference type="PDB" id="8P8B">
    <property type="method" value="EM"/>
    <property type="resolution" value="2.90 A"/>
    <property type="chains" value="n=1-116"/>
</dbReference>
<dbReference type="PDB" id="8P8V">
    <property type="method" value="EM"/>
    <property type="resolution" value="8.70 A"/>
    <property type="chains" value="n=1-116"/>
</dbReference>
<dbReference type="PDB" id="8P8W">
    <property type="method" value="EM"/>
    <property type="resolution" value="8.70 A"/>
    <property type="chains" value="n=1-116"/>
</dbReference>
<dbReference type="PDBsum" id="7OOD"/>
<dbReference type="PDBsum" id="7P6Z"/>
<dbReference type="PDBsum" id="7PAH"/>
<dbReference type="PDBsum" id="7PAI"/>
<dbReference type="PDBsum" id="7PAJ"/>
<dbReference type="PDBsum" id="7PAK"/>
<dbReference type="PDBsum" id="7PAL"/>
<dbReference type="PDBsum" id="7PAM"/>
<dbReference type="PDBsum" id="7PAN"/>
<dbReference type="PDBsum" id="7PAO"/>
<dbReference type="PDBsum" id="7PAQ"/>
<dbReference type="PDBsum" id="7PAR"/>
<dbReference type="PDBsum" id="7PAS"/>
<dbReference type="PDBsum" id="7PAT"/>
<dbReference type="PDBsum" id="7PAU"/>
<dbReference type="PDBsum" id="7PH9"/>
<dbReference type="PDBsum" id="7PHA"/>
<dbReference type="PDBsum" id="7PHB"/>
<dbReference type="PDBsum" id="7PHC"/>
<dbReference type="PDBsum" id="7PI8"/>
<dbReference type="PDBsum" id="7PI9"/>
<dbReference type="PDBsum" id="7PIA"/>
<dbReference type="PDBsum" id="7PIB"/>
<dbReference type="PDBsum" id="7PIC"/>
<dbReference type="PDBsum" id="7PIO"/>
<dbReference type="PDBsum" id="7PIP"/>
<dbReference type="PDBsum" id="7PIQ"/>
<dbReference type="PDBsum" id="7PIR"/>
<dbReference type="PDBsum" id="7PIS"/>
<dbReference type="PDBsum" id="7PIT"/>
<dbReference type="PDBsum" id="8P7X"/>
<dbReference type="PDBsum" id="8P7Y"/>
<dbReference type="PDBsum" id="8P8B"/>
<dbReference type="PDBsum" id="8P8V"/>
<dbReference type="PDBsum" id="8P8W"/>
<dbReference type="EMDB" id="EMD-13234"/>
<dbReference type="EMDB" id="EMD-13272"/>
<dbReference type="EMDB" id="EMD-13273"/>
<dbReference type="EMDB" id="EMD-13274"/>
<dbReference type="EMDB" id="EMD-13275"/>
<dbReference type="EMDB" id="EMD-13276"/>
<dbReference type="EMDB" id="EMD-13277"/>
<dbReference type="EMDB" id="EMD-13278"/>
<dbReference type="EMDB" id="EMD-13279"/>
<dbReference type="EMDB" id="EMD-13280"/>
<dbReference type="EMDB" id="EMD-13281"/>
<dbReference type="EMDB" id="EMD-13282"/>
<dbReference type="EMDB" id="EMD-13285"/>
<dbReference type="EMDB" id="EMD-13286"/>
<dbReference type="EMDB" id="EMD-13410"/>
<dbReference type="EMDB" id="EMD-13411"/>
<dbReference type="EMDB" id="EMD-13412"/>
<dbReference type="EMDB" id="EMD-13413"/>
<dbReference type="EMDB" id="EMD-13432"/>
<dbReference type="EMDB" id="EMD-13433"/>
<dbReference type="EMDB" id="EMD-13434"/>
<dbReference type="EMDB" id="EMD-13435"/>
<dbReference type="EMDB" id="EMD-13436"/>
<dbReference type="EMDB" id="EMD-13445"/>
<dbReference type="EMDB" id="EMD-13446"/>
<dbReference type="EMDB" id="EMD-13447"/>
<dbReference type="EMDB" id="EMD-13448"/>
<dbReference type="EMDB" id="EMD-13449"/>
<dbReference type="EMDB" id="EMD-13450"/>
<dbReference type="SMR" id="Q50302"/>
<dbReference type="STRING" id="272634.MPN_181"/>
<dbReference type="EnsemblBacteria" id="AAB96298">
    <property type="protein sequence ID" value="AAB96298"/>
    <property type="gene ID" value="MPN_181"/>
</dbReference>
<dbReference type="GeneID" id="66609171"/>
<dbReference type="KEGG" id="mpn:MPN_181"/>
<dbReference type="PATRIC" id="fig|272634.6.peg.199"/>
<dbReference type="HOGENOM" id="CLU_098841_0_1_14"/>
<dbReference type="OrthoDB" id="9810939at2"/>
<dbReference type="BioCyc" id="MPNE272634:G1GJ3-294-MONOMER"/>
<dbReference type="Proteomes" id="UP000000808">
    <property type="component" value="Chromosome"/>
</dbReference>
<dbReference type="GO" id="GO:0022625">
    <property type="term" value="C:cytosolic large ribosomal subunit"/>
    <property type="evidence" value="ECO:0007669"/>
    <property type="project" value="TreeGrafter"/>
</dbReference>
<dbReference type="GO" id="GO:0008097">
    <property type="term" value="F:5S rRNA binding"/>
    <property type="evidence" value="ECO:0007669"/>
    <property type="project" value="TreeGrafter"/>
</dbReference>
<dbReference type="GO" id="GO:0003735">
    <property type="term" value="F:structural constituent of ribosome"/>
    <property type="evidence" value="ECO:0007669"/>
    <property type="project" value="InterPro"/>
</dbReference>
<dbReference type="GO" id="GO:0006412">
    <property type="term" value="P:translation"/>
    <property type="evidence" value="ECO:0007669"/>
    <property type="project" value="UniProtKB-UniRule"/>
</dbReference>
<dbReference type="CDD" id="cd00432">
    <property type="entry name" value="Ribosomal_L18_L5e"/>
    <property type="match status" value="1"/>
</dbReference>
<dbReference type="Gene3D" id="3.30.420.100">
    <property type="match status" value="1"/>
</dbReference>
<dbReference type="HAMAP" id="MF_01337_B">
    <property type="entry name" value="Ribosomal_uL18_B"/>
    <property type="match status" value="1"/>
</dbReference>
<dbReference type="InterPro" id="IPR004389">
    <property type="entry name" value="Ribosomal_uL18_bac-type"/>
</dbReference>
<dbReference type="InterPro" id="IPR005484">
    <property type="entry name" value="Ribosomal_uL18_bac/euk"/>
</dbReference>
<dbReference type="NCBIfam" id="TIGR00060">
    <property type="entry name" value="L18_bact"/>
    <property type="match status" value="1"/>
</dbReference>
<dbReference type="PANTHER" id="PTHR12899">
    <property type="entry name" value="39S RIBOSOMAL PROTEIN L18, MITOCHONDRIAL"/>
    <property type="match status" value="1"/>
</dbReference>
<dbReference type="PANTHER" id="PTHR12899:SF3">
    <property type="entry name" value="LARGE RIBOSOMAL SUBUNIT PROTEIN UL18M"/>
    <property type="match status" value="1"/>
</dbReference>
<dbReference type="Pfam" id="PF00861">
    <property type="entry name" value="Ribosomal_L18p"/>
    <property type="match status" value="1"/>
</dbReference>
<dbReference type="SUPFAM" id="SSF53137">
    <property type="entry name" value="Translational machinery components"/>
    <property type="match status" value="1"/>
</dbReference>
<accession>Q50302</accession>
<evidence type="ECO:0000255" key="1">
    <source>
        <dbReference type="HAMAP-Rule" id="MF_01337"/>
    </source>
</evidence>
<evidence type="ECO:0000305" key="2"/>
<evidence type="ECO:0007829" key="3">
    <source>
        <dbReference type="PDB" id="8P8B"/>
    </source>
</evidence>
<sequence length="116" mass="13046">MKTRTEQRRLRHKRIVKKIRATNHDNRVVLMVIKSLNHISVQAWDFSQNIVLASSSSLALKLKNGNKDNAKLVGQDIADKLVKLKLTNVVFDTGGSKYHGRIAALAEAARERGLNF</sequence>
<keyword id="KW-0002">3D-structure</keyword>
<keyword id="KW-1185">Reference proteome</keyword>
<keyword id="KW-0687">Ribonucleoprotein</keyword>
<keyword id="KW-0689">Ribosomal protein</keyword>
<keyword id="KW-0694">RNA-binding</keyword>
<keyword id="KW-0699">rRNA-binding</keyword>
<protein>
    <recommendedName>
        <fullName evidence="1">Large ribosomal subunit protein uL18</fullName>
    </recommendedName>
    <alternativeName>
        <fullName evidence="2">50S ribosomal protein L18</fullName>
    </alternativeName>
</protein>
<comment type="function">
    <text evidence="1">This is one of the proteins that bind and probably mediate the attachment of the 5S RNA into the large ribosomal subunit, where it forms part of the central protuberance.</text>
</comment>
<comment type="subunit">
    <text evidence="1">Part of the 50S ribosomal subunit; part of the 5S rRNA/L5/L18/L25 subcomplex. Contacts the 5S and 23S rRNAs.</text>
</comment>
<comment type="similarity">
    <text evidence="1">Belongs to the universal ribosomal protein uL18 family.</text>
</comment>
<reference key="1">
    <citation type="journal article" date="1996" name="Nucleic Acids Res.">
        <title>Sequence analysis of 56 kb from the genome of the bacterium Mycoplasma pneumoniae comprising the dnaA region, the atp operon and a cluster of ribosomal protein genes.</title>
        <authorList>
            <person name="Hilbert H."/>
            <person name="Himmelreich R."/>
            <person name="Plagens H."/>
            <person name="Herrmann R."/>
        </authorList>
    </citation>
    <scope>NUCLEOTIDE SEQUENCE [GENOMIC DNA]</scope>
    <source>
        <strain>ATCC 29342 / M129 / Subtype 1</strain>
    </source>
</reference>
<reference key="2">
    <citation type="journal article" date="1996" name="Nucleic Acids Res.">
        <title>Complete sequence analysis of the genome of the bacterium Mycoplasma pneumoniae.</title>
        <authorList>
            <person name="Himmelreich R."/>
            <person name="Hilbert H."/>
            <person name="Plagens H."/>
            <person name="Pirkl E."/>
            <person name="Li B.-C."/>
            <person name="Herrmann R."/>
        </authorList>
    </citation>
    <scope>NUCLEOTIDE SEQUENCE [LARGE SCALE GENOMIC DNA]</scope>
    <source>
        <strain>ATCC 29342 / M129 / Subtype 1</strain>
    </source>
</reference>
<organism>
    <name type="scientific">Mycoplasma pneumoniae (strain ATCC 29342 / M129 / Subtype 1)</name>
    <name type="common">Mycoplasmoides pneumoniae</name>
    <dbReference type="NCBI Taxonomy" id="272634"/>
    <lineage>
        <taxon>Bacteria</taxon>
        <taxon>Bacillati</taxon>
        <taxon>Mycoplasmatota</taxon>
        <taxon>Mycoplasmoidales</taxon>
        <taxon>Mycoplasmoidaceae</taxon>
        <taxon>Mycoplasmoides</taxon>
    </lineage>
</organism>
<gene>
    <name evidence="1" type="primary">rplR</name>
    <name type="ordered locus">MPN_181</name>
    <name type="ORF">MP650</name>
</gene>